<proteinExistence type="evidence at protein level"/>
<sequence>MSKEPLILWLMIEFWWLYLTPVTSETVVTEVLGHRVTLPCLYSSWSHNSNSMCWGKDQCPYSGCKEALIRTDGMRVTSRKSAKYRLQGTIPRGDVSLTILNPSESDSGVYCCRIEVPGWFNDVKINVRLNLQRASTTTHRTATTTTRRTTTTSPTTTRQMTTTPAALPTTVVTTPDLTTGTPLQMTTIAVFTTANTCLSLTPSTLPEEATGLLTPEPSKEGPILTAESETVLPSDSWSSVESTSADTVLLTSKESKVWDLPSTSHVSMWKTSDSVSSPQPGASDTAVPEQNKTTKTGQMDGIPMSMKNEMPISQLLMIIAPSLGFVLFALFVAFLLRGKLMETYCSQKHTRLDYIGDSKNVLNDVQHGREDEDGLFTL</sequence>
<dbReference type="EMBL" id="AK301337">
    <property type="status" value="NOT_ANNOTATED_CDS"/>
    <property type="molecule type" value="mRNA"/>
</dbReference>
<dbReference type="EMBL" id="AC008491">
    <property type="status" value="NOT_ANNOTATED_CDS"/>
    <property type="molecule type" value="Genomic_DNA"/>
</dbReference>
<dbReference type="EMBL" id="AC026777">
    <property type="status" value="NOT_ANNOTATED_CDS"/>
    <property type="molecule type" value="Genomic_DNA"/>
</dbReference>
<dbReference type="EMBL" id="BC008988">
    <property type="protein sequence ID" value="AAH08988.1"/>
    <property type="molecule type" value="mRNA"/>
</dbReference>
<dbReference type="CCDS" id="CCDS4332.1">
    <molecule id="Q96H15-1"/>
</dbReference>
<dbReference type="CCDS" id="CCDS54943.1">
    <molecule id="Q96H15-2"/>
</dbReference>
<dbReference type="RefSeq" id="NP_001140198.1">
    <molecule id="Q96H15-2"/>
    <property type="nucleotide sequence ID" value="NM_001146726.2"/>
</dbReference>
<dbReference type="RefSeq" id="NP_612388.2">
    <molecule id="Q96H15-1"/>
    <property type="nucleotide sequence ID" value="NM_138379.3"/>
</dbReference>
<dbReference type="PDB" id="5DZN">
    <property type="method" value="X-ray"/>
    <property type="resolution" value="2.30 A"/>
    <property type="chains" value="A/B/C/D/E/F/G/H=22-134"/>
</dbReference>
<dbReference type="PDB" id="5F7F">
    <property type="method" value="X-ray"/>
    <property type="resolution" value="1.50 A"/>
    <property type="chains" value="A/B=24-134"/>
</dbReference>
<dbReference type="PDB" id="5F7H">
    <property type="method" value="X-ray"/>
    <property type="resolution" value="2.50 A"/>
    <property type="chains" value="A/B/C/D/E/F=24-134"/>
</dbReference>
<dbReference type="PDBsum" id="5DZN"/>
<dbReference type="PDBsum" id="5F7F"/>
<dbReference type="PDBsum" id="5F7H"/>
<dbReference type="SMR" id="Q96H15"/>
<dbReference type="BioGRID" id="124892">
    <property type="interactions" value="15"/>
</dbReference>
<dbReference type="FunCoup" id="Q96H15">
    <property type="interactions" value="265"/>
</dbReference>
<dbReference type="IntAct" id="Q96H15">
    <property type="interactions" value="11"/>
</dbReference>
<dbReference type="MINT" id="Q96H15"/>
<dbReference type="STRING" id="9606.ENSP00000274532"/>
<dbReference type="GlyCosmos" id="Q96H15">
    <property type="glycosylation" value="1 site, No reported glycans"/>
</dbReference>
<dbReference type="GlyGen" id="Q96H15">
    <property type="glycosylation" value="1 site"/>
</dbReference>
<dbReference type="iPTMnet" id="Q96H15"/>
<dbReference type="PhosphoSitePlus" id="Q96H15"/>
<dbReference type="BioMuta" id="TIMD4"/>
<dbReference type="DMDM" id="296452930"/>
<dbReference type="MassIVE" id="Q96H15"/>
<dbReference type="PaxDb" id="9606-ENSP00000274532"/>
<dbReference type="PeptideAtlas" id="Q96H15"/>
<dbReference type="ProteomicsDB" id="6068"/>
<dbReference type="ProteomicsDB" id="76694">
    <molecule id="Q96H15-1"/>
</dbReference>
<dbReference type="Antibodypedia" id="2737">
    <property type="antibodies" value="451 antibodies from 38 providers"/>
</dbReference>
<dbReference type="DNASU" id="91937"/>
<dbReference type="Ensembl" id="ENST00000274532.7">
    <molecule id="Q96H15-1"/>
    <property type="protein sequence ID" value="ENSP00000274532.2"/>
    <property type="gene ID" value="ENSG00000145850.9"/>
</dbReference>
<dbReference type="Ensembl" id="ENST00000407087.4">
    <molecule id="Q96H15-2"/>
    <property type="protein sequence ID" value="ENSP00000385973.3"/>
    <property type="gene ID" value="ENSG00000145850.9"/>
</dbReference>
<dbReference type="GeneID" id="91937"/>
<dbReference type="KEGG" id="hsa:91937"/>
<dbReference type="MANE-Select" id="ENST00000274532.7">
    <property type="protein sequence ID" value="ENSP00000274532.2"/>
    <property type="RefSeq nucleotide sequence ID" value="NM_138379.3"/>
    <property type="RefSeq protein sequence ID" value="NP_612388.2"/>
</dbReference>
<dbReference type="UCSC" id="uc003lwh.2">
    <molecule id="Q96H15-1"/>
    <property type="organism name" value="human"/>
</dbReference>
<dbReference type="AGR" id="HGNC:25132"/>
<dbReference type="CTD" id="91937"/>
<dbReference type="DisGeNET" id="91937"/>
<dbReference type="GeneCards" id="TIMD4"/>
<dbReference type="HGNC" id="HGNC:25132">
    <property type="gene designation" value="TIMD4"/>
</dbReference>
<dbReference type="HPA" id="ENSG00000145850">
    <property type="expression patterns" value="Group enriched (lymphoid tissue, testis)"/>
</dbReference>
<dbReference type="MIM" id="610096">
    <property type="type" value="gene"/>
</dbReference>
<dbReference type="neXtProt" id="NX_Q96H15"/>
<dbReference type="OpenTargets" id="ENSG00000145850"/>
<dbReference type="PharmGKB" id="PA134989118"/>
<dbReference type="VEuPathDB" id="HostDB:ENSG00000145850"/>
<dbReference type="eggNOG" id="ENOG502S1A2">
    <property type="taxonomic scope" value="Eukaryota"/>
</dbReference>
<dbReference type="GeneTree" id="ENSGT00940000161609"/>
<dbReference type="HOGENOM" id="CLU_047504_0_1_1"/>
<dbReference type="InParanoid" id="Q96H15"/>
<dbReference type="OMA" id="HTDGTKV"/>
<dbReference type="OrthoDB" id="434099at2759"/>
<dbReference type="PAN-GO" id="Q96H15">
    <property type="GO annotations" value="3 GO annotations based on evolutionary models"/>
</dbReference>
<dbReference type="PhylomeDB" id="Q96H15"/>
<dbReference type="TreeFam" id="TF336163"/>
<dbReference type="PathwayCommons" id="Q96H15"/>
<dbReference type="BioGRID-ORCS" id="91937">
    <property type="hits" value="12 hits in 1139 CRISPR screens"/>
</dbReference>
<dbReference type="EvolutionaryTrace" id="Q96H15"/>
<dbReference type="GeneWiki" id="TIMD4"/>
<dbReference type="GenomeRNAi" id="91937"/>
<dbReference type="Pharos" id="Q96H15">
    <property type="development level" value="Tbio"/>
</dbReference>
<dbReference type="PRO" id="PR:Q96H15"/>
<dbReference type="Proteomes" id="UP000005640">
    <property type="component" value="Chromosome 5"/>
</dbReference>
<dbReference type="RNAct" id="Q96H15">
    <property type="molecule type" value="protein"/>
</dbReference>
<dbReference type="Bgee" id="ENSG00000145850">
    <property type="expression patterns" value="Expressed in left testis and 107 other cell types or tissues"/>
</dbReference>
<dbReference type="ExpressionAtlas" id="Q96H15">
    <property type="expression patterns" value="baseline and differential"/>
</dbReference>
<dbReference type="GO" id="GO:0005576">
    <property type="term" value="C:extracellular region"/>
    <property type="evidence" value="ECO:0007669"/>
    <property type="project" value="UniProtKB-SubCell"/>
</dbReference>
<dbReference type="GO" id="GO:0005886">
    <property type="term" value="C:plasma membrane"/>
    <property type="evidence" value="ECO:0007669"/>
    <property type="project" value="UniProtKB-SubCell"/>
</dbReference>
<dbReference type="GO" id="GO:0001786">
    <property type="term" value="F:phosphatidylserine binding"/>
    <property type="evidence" value="ECO:0000318"/>
    <property type="project" value="GO_Central"/>
</dbReference>
<dbReference type="GO" id="GO:0043277">
    <property type="term" value="P:apoptotic cell clearance"/>
    <property type="evidence" value="ECO:0000318"/>
    <property type="project" value="GO_Central"/>
</dbReference>
<dbReference type="GO" id="GO:0060097">
    <property type="term" value="P:cytoskeletal rearrangement involved in phagocytosis, engulfment"/>
    <property type="evidence" value="ECO:0000318"/>
    <property type="project" value="GO_Central"/>
</dbReference>
<dbReference type="FunFam" id="2.60.40.10:FF:000774">
    <property type="entry name" value="Hepatitis A virus cellular receptor 1"/>
    <property type="match status" value="1"/>
</dbReference>
<dbReference type="Gene3D" id="2.60.40.10">
    <property type="entry name" value="Immunoglobulins"/>
    <property type="match status" value="1"/>
</dbReference>
<dbReference type="InterPro" id="IPR007110">
    <property type="entry name" value="Ig-like_dom"/>
</dbReference>
<dbReference type="InterPro" id="IPR036179">
    <property type="entry name" value="Ig-like_dom_sf"/>
</dbReference>
<dbReference type="InterPro" id="IPR013783">
    <property type="entry name" value="Ig-like_fold"/>
</dbReference>
<dbReference type="InterPro" id="IPR003599">
    <property type="entry name" value="Ig_sub"/>
</dbReference>
<dbReference type="InterPro" id="IPR013106">
    <property type="entry name" value="Ig_V-set"/>
</dbReference>
<dbReference type="PANTHER" id="PTHR46608">
    <property type="entry name" value="T-CELL IMMUNOGLOBULIN AND MUCIN DOMAIN-CONTAINING PROTEIN 4"/>
    <property type="match status" value="1"/>
</dbReference>
<dbReference type="PANTHER" id="PTHR46608:SF3">
    <property type="entry name" value="T-CELL IMMUNOGLOBULIN AND MUCIN DOMAIN-CONTAINING PROTEIN 4"/>
    <property type="match status" value="1"/>
</dbReference>
<dbReference type="Pfam" id="PF07686">
    <property type="entry name" value="V-set"/>
    <property type="match status" value="1"/>
</dbReference>
<dbReference type="SMART" id="SM00409">
    <property type="entry name" value="IG"/>
    <property type="match status" value="1"/>
</dbReference>
<dbReference type="SUPFAM" id="SSF48726">
    <property type="entry name" value="Immunoglobulin"/>
    <property type="match status" value="1"/>
</dbReference>
<dbReference type="PROSITE" id="PS50835">
    <property type="entry name" value="IG_LIKE"/>
    <property type="match status" value="1"/>
</dbReference>
<feature type="signal peptide" evidence="2">
    <location>
        <begin position="1"/>
        <end position="24"/>
    </location>
</feature>
<feature type="chain" id="PRO_0000042103" description="T-cell immunoglobulin and mucin domain-containing protein 4">
    <location>
        <begin position="25"/>
        <end position="378"/>
    </location>
</feature>
<feature type="topological domain" description="Extracellular" evidence="2">
    <location>
        <begin position="25"/>
        <end position="314"/>
    </location>
</feature>
<feature type="transmembrane region" description="Helical" evidence="2">
    <location>
        <begin position="315"/>
        <end position="335"/>
    </location>
</feature>
<feature type="topological domain" description="Cytoplasmic" evidence="2">
    <location>
        <begin position="336"/>
        <end position="378"/>
    </location>
</feature>
<feature type="domain" description="Ig-like V-type">
    <location>
        <begin position="25"/>
        <end position="126"/>
    </location>
</feature>
<feature type="region of interest" description="Disordered" evidence="4">
    <location>
        <begin position="136"/>
        <end position="160"/>
    </location>
</feature>
<feature type="region of interest" description="Disordered" evidence="4">
    <location>
        <begin position="269"/>
        <end position="304"/>
    </location>
</feature>
<feature type="compositionally biased region" description="Polar residues" evidence="4">
    <location>
        <begin position="269"/>
        <end position="297"/>
    </location>
</feature>
<feature type="modified residue" description="Phosphoserine" evidence="1">
    <location>
        <position position="358"/>
    </location>
</feature>
<feature type="glycosylation site" description="N-linked (GlcNAc...) asparagine" evidence="2">
    <location>
        <position position="291"/>
    </location>
</feature>
<feature type="disulfide bond" evidence="3">
    <location>
        <begin position="40"/>
        <end position="112"/>
    </location>
</feature>
<feature type="disulfide bond" evidence="3">
    <location>
        <begin position="53"/>
        <end position="64"/>
    </location>
</feature>
<feature type="disulfide bond" evidence="3">
    <location>
        <begin position="59"/>
        <end position="111"/>
    </location>
</feature>
<feature type="splice variant" id="VSP_045474" description="In isoform 2." evidence="11">
    <location>
        <begin position="254"/>
        <end position="281"/>
    </location>
</feature>
<feature type="sequence variant" id="VAR_049946" description="In dbSNP:rs6873053." evidence="5 6">
    <original>V</original>
    <variation>A</variation>
    <location>
        <position position="240"/>
    </location>
</feature>
<feature type="sequence variant" id="VAR_049947" description="In dbSNP:rs7731575.">
    <original>V</original>
    <variation>M</variation>
    <location>
        <position position="365"/>
    </location>
</feature>
<feature type="sequence conflict" description="In Ref. 1; AK301337." evidence="12" ref="1">
    <original>A</original>
    <variation>T</variation>
    <location>
        <position position="67"/>
    </location>
</feature>
<feature type="strand" evidence="13">
    <location>
        <begin position="25"/>
        <end position="31"/>
    </location>
</feature>
<feature type="strand" evidence="13">
    <location>
        <begin position="36"/>
        <end position="38"/>
    </location>
</feature>
<feature type="turn" evidence="13">
    <location>
        <begin position="47"/>
        <end position="49"/>
    </location>
</feature>
<feature type="strand" evidence="13">
    <location>
        <begin position="51"/>
        <end position="58"/>
    </location>
</feature>
<feature type="strand" evidence="13">
    <location>
        <begin position="68"/>
        <end position="71"/>
    </location>
</feature>
<feature type="strand" evidence="13">
    <location>
        <begin position="73"/>
        <end position="81"/>
    </location>
</feature>
<feature type="strand" evidence="13">
    <location>
        <begin position="84"/>
        <end position="86"/>
    </location>
</feature>
<feature type="helix" evidence="13">
    <location>
        <begin position="90"/>
        <end position="92"/>
    </location>
</feature>
<feature type="strand" evidence="13">
    <location>
        <begin position="97"/>
        <end position="101"/>
    </location>
</feature>
<feature type="helix" evidence="13">
    <location>
        <begin position="104"/>
        <end position="106"/>
    </location>
</feature>
<feature type="strand" evidence="13">
    <location>
        <begin position="108"/>
        <end position="115"/>
    </location>
</feature>
<feature type="strand" evidence="13">
    <location>
        <begin position="117"/>
        <end position="120"/>
    </location>
</feature>
<feature type="strand" evidence="13">
    <location>
        <begin position="123"/>
        <end position="133"/>
    </location>
</feature>
<protein>
    <recommendedName>
        <fullName>T-cell immunoglobulin and mucin domain-containing protein 4</fullName>
        <shortName>TIMD-4</shortName>
    </recommendedName>
    <alternativeName>
        <fullName>T-cell immunoglobulin mucin receptor 4</fullName>
        <shortName>TIM-4</shortName>
    </alternativeName>
    <alternativeName>
        <fullName>T-cell membrane protein 4</fullName>
    </alternativeName>
</protein>
<organism>
    <name type="scientific">Homo sapiens</name>
    <name type="common">Human</name>
    <dbReference type="NCBI Taxonomy" id="9606"/>
    <lineage>
        <taxon>Eukaryota</taxon>
        <taxon>Metazoa</taxon>
        <taxon>Chordata</taxon>
        <taxon>Craniata</taxon>
        <taxon>Vertebrata</taxon>
        <taxon>Euteleostomi</taxon>
        <taxon>Mammalia</taxon>
        <taxon>Eutheria</taxon>
        <taxon>Euarchontoglires</taxon>
        <taxon>Primates</taxon>
        <taxon>Haplorrhini</taxon>
        <taxon>Catarrhini</taxon>
        <taxon>Hominidae</taxon>
        <taxon>Homo</taxon>
    </lineage>
</organism>
<evidence type="ECO:0000250" key="1">
    <source>
        <dbReference type="UniProtKB" id="Q6U7R4"/>
    </source>
</evidence>
<evidence type="ECO:0000255" key="2"/>
<evidence type="ECO:0000255" key="3">
    <source>
        <dbReference type="PROSITE-ProRule" id="PRU00114"/>
    </source>
</evidence>
<evidence type="ECO:0000256" key="4">
    <source>
        <dbReference type="SAM" id="MobiDB-lite"/>
    </source>
</evidence>
<evidence type="ECO:0000269" key="5">
    <source>
    </source>
</evidence>
<evidence type="ECO:0000269" key="6">
    <source>
    </source>
</evidence>
<evidence type="ECO:0000269" key="7">
    <source>
    </source>
</evidence>
<evidence type="ECO:0000269" key="8">
    <source>
    </source>
</evidence>
<evidence type="ECO:0000269" key="9">
    <source>
    </source>
</evidence>
<evidence type="ECO:0000269" key="10">
    <source>
    </source>
</evidence>
<evidence type="ECO:0000303" key="11">
    <source>
    </source>
</evidence>
<evidence type="ECO:0000305" key="12"/>
<evidence type="ECO:0007829" key="13">
    <source>
        <dbReference type="PDB" id="5F7F"/>
    </source>
</evidence>
<keyword id="KW-0002">3D-structure</keyword>
<keyword id="KW-0025">Alternative splicing</keyword>
<keyword id="KW-1003">Cell membrane</keyword>
<keyword id="KW-1015">Disulfide bond</keyword>
<keyword id="KW-0325">Glycoprotein</keyword>
<keyword id="KW-0393">Immunoglobulin domain</keyword>
<keyword id="KW-0472">Membrane</keyword>
<keyword id="KW-0597">Phosphoprotein</keyword>
<keyword id="KW-1267">Proteomics identification</keyword>
<keyword id="KW-1185">Reference proteome</keyword>
<keyword id="KW-0964">Secreted</keyword>
<keyword id="KW-0732">Signal</keyword>
<keyword id="KW-0812">Transmembrane</keyword>
<keyword id="KW-1133">Transmembrane helix</keyword>
<name>TIMD4_HUMAN</name>
<accession>Q96H15</accession>
<accession>B5MCL9</accession>
<comment type="function">
    <text evidence="1 8 9 10">Phosphatidylserine receptor that plays different role in immune response including phagocytosis of apoptotic cells and T-cell regulation. Controls T-cell activation in a bimodal fashion, decreasing the activation of naive T-cells by inducing cell cycle arrest, while increasing proliferation of activated T-cells by activating AKT1 and ERK1/2 phosphorylations and subsequent signaling pathways (By similarity). Also plays a role in efferocytosis which is the process by which apoptotic cells are removed by phagocytic cells (PubMed:32703939, PubMed:34067457). Mechanistically, promotes the engulfment of apoptotic cells or exogenous particles by securing them to phagocytes through direct binding to phosphatidylserine present on apoptotic cells, while other engulfment receptors such as MERTK efficiently recognize apoptotic cells and mediate their ingestion (PubMed:32640697). Additionally, promotes autophagy process by suppressing NLRP3 inflammasome activity via activation of LKB1/PRKAA1 pathway in a phosphatidylserine-dependent mechanism (By similarity).</text>
</comment>
<comment type="function">
    <text evidence="7">(Microbial infection) Plays a positive role in exosome-mediated trafficking of HIV-1 virus and its entry into immune cells.</text>
</comment>
<comment type="subunit">
    <text evidence="8 10">Interacts with MERTK; this interaction enhances TIMD4-mediated efferocytosis (PubMed:32640697). Interacts with EPHA2 (PubMed:34067457).</text>
</comment>
<comment type="subcellular location">
    <subcellularLocation>
        <location evidence="8 9 10">Cell membrane</location>
        <topology evidence="12">Single-pass type I membrane protein</topology>
    </subcellularLocation>
    <subcellularLocation>
        <location evidence="7">Secreted</location>
        <location evidence="7">Extracellular exosome</location>
    </subcellularLocation>
</comment>
<comment type="alternative products">
    <event type="alternative splicing"/>
    <isoform>
        <id>Q96H15-1</id>
        <name>1</name>
        <sequence type="displayed"/>
    </isoform>
    <isoform>
        <id>Q96H15-2</id>
        <name>2</name>
        <sequence type="described" ref="VSP_045474"/>
    </isoform>
</comment>
<comment type="domain">
    <text>Recognizes phosphatidyl serine via its immunoglobulin domain.</text>
</comment>
<comment type="similarity">
    <text evidence="12">Belongs to the immunoglobulin superfamily. TIM family.</text>
</comment>
<reference key="1">
    <citation type="journal article" date="2004" name="Nat. Genet.">
        <title>Complete sequencing and characterization of 21,243 full-length human cDNAs.</title>
        <authorList>
            <person name="Ota T."/>
            <person name="Suzuki Y."/>
            <person name="Nishikawa T."/>
            <person name="Otsuki T."/>
            <person name="Sugiyama T."/>
            <person name="Irie R."/>
            <person name="Wakamatsu A."/>
            <person name="Hayashi K."/>
            <person name="Sato H."/>
            <person name="Nagai K."/>
            <person name="Kimura K."/>
            <person name="Makita H."/>
            <person name="Sekine M."/>
            <person name="Obayashi M."/>
            <person name="Nishi T."/>
            <person name="Shibahara T."/>
            <person name="Tanaka T."/>
            <person name="Ishii S."/>
            <person name="Yamamoto J."/>
            <person name="Saito K."/>
            <person name="Kawai Y."/>
            <person name="Isono Y."/>
            <person name="Nakamura Y."/>
            <person name="Nagahari K."/>
            <person name="Murakami K."/>
            <person name="Yasuda T."/>
            <person name="Iwayanagi T."/>
            <person name="Wagatsuma M."/>
            <person name="Shiratori A."/>
            <person name="Sudo H."/>
            <person name="Hosoiri T."/>
            <person name="Kaku Y."/>
            <person name="Kodaira H."/>
            <person name="Kondo H."/>
            <person name="Sugawara M."/>
            <person name="Takahashi M."/>
            <person name="Kanda K."/>
            <person name="Yokoi T."/>
            <person name="Furuya T."/>
            <person name="Kikkawa E."/>
            <person name="Omura Y."/>
            <person name="Abe K."/>
            <person name="Kamihara K."/>
            <person name="Katsuta N."/>
            <person name="Sato K."/>
            <person name="Tanikawa M."/>
            <person name="Yamazaki M."/>
            <person name="Ninomiya K."/>
            <person name="Ishibashi T."/>
            <person name="Yamashita H."/>
            <person name="Murakawa K."/>
            <person name="Fujimori K."/>
            <person name="Tanai H."/>
            <person name="Kimata M."/>
            <person name="Watanabe M."/>
            <person name="Hiraoka S."/>
            <person name="Chiba Y."/>
            <person name="Ishida S."/>
            <person name="Ono Y."/>
            <person name="Takiguchi S."/>
            <person name="Watanabe S."/>
            <person name="Yosida M."/>
            <person name="Hotuta T."/>
            <person name="Kusano J."/>
            <person name="Kanehori K."/>
            <person name="Takahashi-Fujii A."/>
            <person name="Hara H."/>
            <person name="Tanase T.-O."/>
            <person name="Nomura Y."/>
            <person name="Togiya S."/>
            <person name="Komai F."/>
            <person name="Hara R."/>
            <person name="Takeuchi K."/>
            <person name="Arita M."/>
            <person name="Imose N."/>
            <person name="Musashino K."/>
            <person name="Yuuki H."/>
            <person name="Oshima A."/>
            <person name="Sasaki N."/>
            <person name="Aotsuka S."/>
            <person name="Yoshikawa Y."/>
            <person name="Matsunawa H."/>
            <person name="Ichihara T."/>
            <person name="Shiohata N."/>
            <person name="Sano S."/>
            <person name="Moriya S."/>
            <person name="Momiyama H."/>
            <person name="Satoh N."/>
            <person name="Takami S."/>
            <person name="Terashima Y."/>
            <person name="Suzuki O."/>
            <person name="Nakagawa S."/>
            <person name="Senoh A."/>
            <person name="Mizoguchi H."/>
            <person name="Goto Y."/>
            <person name="Shimizu F."/>
            <person name="Wakebe H."/>
            <person name="Hishigaki H."/>
            <person name="Watanabe T."/>
            <person name="Sugiyama A."/>
            <person name="Takemoto M."/>
            <person name="Kawakami B."/>
            <person name="Yamazaki M."/>
            <person name="Watanabe K."/>
            <person name="Kumagai A."/>
            <person name="Itakura S."/>
            <person name="Fukuzumi Y."/>
            <person name="Fujimori Y."/>
            <person name="Komiyama M."/>
            <person name="Tashiro H."/>
            <person name="Tanigami A."/>
            <person name="Fujiwara T."/>
            <person name="Ono T."/>
            <person name="Yamada K."/>
            <person name="Fujii Y."/>
            <person name="Ozaki K."/>
            <person name="Hirao M."/>
            <person name="Ohmori Y."/>
            <person name="Kawabata A."/>
            <person name="Hikiji T."/>
            <person name="Kobatake N."/>
            <person name="Inagaki H."/>
            <person name="Ikema Y."/>
            <person name="Okamoto S."/>
            <person name="Okitani R."/>
            <person name="Kawakami T."/>
            <person name="Noguchi S."/>
            <person name="Itoh T."/>
            <person name="Shigeta K."/>
            <person name="Senba T."/>
            <person name="Matsumura K."/>
            <person name="Nakajima Y."/>
            <person name="Mizuno T."/>
            <person name="Morinaga M."/>
            <person name="Sasaki M."/>
            <person name="Togashi T."/>
            <person name="Oyama M."/>
            <person name="Hata H."/>
            <person name="Watanabe M."/>
            <person name="Komatsu T."/>
            <person name="Mizushima-Sugano J."/>
            <person name="Satoh T."/>
            <person name="Shirai Y."/>
            <person name="Takahashi Y."/>
            <person name="Nakagawa K."/>
            <person name="Okumura K."/>
            <person name="Nagase T."/>
            <person name="Nomura N."/>
            <person name="Kikuchi H."/>
            <person name="Masuho Y."/>
            <person name="Yamashita R."/>
            <person name="Nakai K."/>
            <person name="Yada T."/>
            <person name="Nakamura Y."/>
            <person name="Ohara O."/>
            <person name="Isogai T."/>
            <person name="Sugano S."/>
        </authorList>
    </citation>
    <scope>NUCLEOTIDE SEQUENCE [LARGE SCALE MRNA] (ISOFORM 2)</scope>
    <scope>VARIANT ALA-240</scope>
    <source>
        <tissue>Synovium</tissue>
    </source>
</reference>
<reference key="2">
    <citation type="journal article" date="2004" name="Nature">
        <title>The DNA sequence and comparative analysis of human chromosome 5.</title>
        <authorList>
            <person name="Schmutz J."/>
            <person name="Martin J."/>
            <person name="Terry A."/>
            <person name="Couronne O."/>
            <person name="Grimwood J."/>
            <person name="Lowry S."/>
            <person name="Gordon L.A."/>
            <person name="Scott D."/>
            <person name="Xie G."/>
            <person name="Huang W."/>
            <person name="Hellsten U."/>
            <person name="Tran-Gyamfi M."/>
            <person name="She X."/>
            <person name="Prabhakar S."/>
            <person name="Aerts A."/>
            <person name="Altherr M."/>
            <person name="Bajorek E."/>
            <person name="Black S."/>
            <person name="Branscomb E."/>
            <person name="Caoile C."/>
            <person name="Challacombe J.F."/>
            <person name="Chan Y.M."/>
            <person name="Denys M."/>
            <person name="Detter J.C."/>
            <person name="Escobar J."/>
            <person name="Flowers D."/>
            <person name="Fotopulos D."/>
            <person name="Glavina T."/>
            <person name="Gomez M."/>
            <person name="Gonzales E."/>
            <person name="Goodstein D."/>
            <person name="Grigoriev I."/>
            <person name="Groza M."/>
            <person name="Hammon N."/>
            <person name="Hawkins T."/>
            <person name="Haydu L."/>
            <person name="Israni S."/>
            <person name="Jett J."/>
            <person name="Kadner K."/>
            <person name="Kimball H."/>
            <person name="Kobayashi A."/>
            <person name="Lopez F."/>
            <person name="Lou Y."/>
            <person name="Martinez D."/>
            <person name="Medina C."/>
            <person name="Morgan J."/>
            <person name="Nandkeshwar R."/>
            <person name="Noonan J.P."/>
            <person name="Pitluck S."/>
            <person name="Pollard M."/>
            <person name="Predki P."/>
            <person name="Priest J."/>
            <person name="Ramirez L."/>
            <person name="Retterer J."/>
            <person name="Rodriguez A."/>
            <person name="Rogers S."/>
            <person name="Salamov A."/>
            <person name="Salazar A."/>
            <person name="Thayer N."/>
            <person name="Tice H."/>
            <person name="Tsai M."/>
            <person name="Ustaszewska A."/>
            <person name="Vo N."/>
            <person name="Wheeler J."/>
            <person name="Wu K."/>
            <person name="Yang J."/>
            <person name="Dickson M."/>
            <person name="Cheng J.-F."/>
            <person name="Eichler E.E."/>
            <person name="Olsen A."/>
            <person name="Pennacchio L.A."/>
            <person name="Rokhsar D.S."/>
            <person name="Richardson P."/>
            <person name="Lucas S.M."/>
            <person name="Myers R.M."/>
            <person name="Rubin E.M."/>
        </authorList>
    </citation>
    <scope>NUCLEOTIDE SEQUENCE [LARGE SCALE GENOMIC DNA]</scope>
</reference>
<reference key="3">
    <citation type="journal article" date="2004" name="Genome Res.">
        <title>The status, quality, and expansion of the NIH full-length cDNA project: the Mammalian Gene Collection (MGC).</title>
        <authorList>
            <consortium name="The MGC Project Team"/>
        </authorList>
    </citation>
    <scope>NUCLEOTIDE SEQUENCE [LARGE SCALE MRNA] (ISOFORM 1)</scope>
    <scope>VARIANT ALA-240</scope>
    <source>
        <tissue>Brain</tissue>
    </source>
</reference>
<reference key="4">
    <citation type="journal article" date="2017" name="Int. J. Nanomedicine">
        <title>Role of TIM-4 in exosome-dependent entry of HIV-1 into human immune cells.</title>
        <authorList>
            <person name="Sims B."/>
            <person name="Farrow A.L."/>
            <person name="Williams S.D."/>
            <person name="Bansal A."/>
            <person name="Krendelchtchikov A."/>
            <person name="Gu L."/>
            <person name="Matthews Q.L."/>
        </authorList>
    </citation>
    <scope>FUNCTION (MICROBIAL INFECTION)</scope>
    <scope>SUBCELLULAR LOCATION</scope>
</reference>
<reference key="5">
    <citation type="journal article" date="2020" name="Cells">
        <title>Mertk Interacts with Tim-4 to Enhance Tim-4-Mediated Efferocytosis.</title>
        <authorList>
            <person name="Moon B."/>
            <person name="Lee J."/>
            <person name="Lee S.A."/>
            <person name="Min C."/>
            <person name="Moon H."/>
            <person name="Kim D."/>
            <person name="Yang S."/>
            <person name="Moon H."/>
            <person name="Jeon J."/>
            <person name="Joo Y.E."/>
            <person name="Park D."/>
        </authorList>
    </citation>
    <scope>FUNCTION</scope>
    <scope>INTERACTION WITH MERKT</scope>
    <scope>SUBCELLULAR LOCATION</scope>
</reference>
<reference key="6">
    <citation type="journal article" date="2020" name="Cell Death Dis.">
        <title>Tim-4 functions as a scavenger receptor for phagocytosis of exogenous particles.</title>
        <authorList>
            <person name="Min C."/>
            <person name="Park J."/>
            <person name="Kim G."/>
            <person name="Moon H."/>
            <person name="Lee S.A."/>
            <person name="Kim D."/>
            <person name="Moon B."/>
            <person name="Yang S."/>
            <person name="Lee J."/>
            <person name="Kim K."/>
            <person name="Cho H."/>
            <person name="Park J."/>
            <person name="Lee D.H."/>
            <person name="Lee G."/>
            <person name="Park D."/>
        </authorList>
    </citation>
    <scope>FUNCTION</scope>
    <scope>SUBCELLULAR LOCATION</scope>
</reference>
<reference key="7">
    <citation type="journal article" date="2021" name="Cells">
        <title>EphA2 Interacts with Tim-4 through Association between Its FN3 Domain and the IgV Domain of Tim-4.</title>
        <authorList>
            <person name="Moon B."/>
            <person name="Yang S."/>
            <person name="Kim K."/>
            <person name="Lee J."/>
            <person name="Jeong D."/>
            <person name="Park D."/>
        </authorList>
    </citation>
    <scope>FUNCTION IN EFFEROCYTOSIS</scope>
    <scope>INTERACTION WITH EPHA2</scope>
    <scope>SUBCELLULAR LOCATION</scope>
</reference>
<gene>
    <name type="primary">TIMD4</name>
    <name type="synonym">TIM4</name>
</gene>